<proteinExistence type="inferred from homology"/>
<comment type="function">
    <text evidence="1">Specifically methylates guanosine-37 in various tRNAs.</text>
</comment>
<comment type="catalytic activity">
    <reaction evidence="1">
        <text>guanosine(37) in tRNA + S-adenosyl-L-methionine = N(1)-methylguanosine(37) in tRNA + S-adenosyl-L-homocysteine + H(+)</text>
        <dbReference type="Rhea" id="RHEA:36899"/>
        <dbReference type="Rhea" id="RHEA-COMP:10145"/>
        <dbReference type="Rhea" id="RHEA-COMP:10147"/>
        <dbReference type="ChEBI" id="CHEBI:15378"/>
        <dbReference type="ChEBI" id="CHEBI:57856"/>
        <dbReference type="ChEBI" id="CHEBI:59789"/>
        <dbReference type="ChEBI" id="CHEBI:73542"/>
        <dbReference type="ChEBI" id="CHEBI:74269"/>
        <dbReference type="EC" id="2.1.1.228"/>
    </reaction>
</comment>
<comment type="subunit">
    <text evidence="1">Homodimer.</text>
</comment>
<comment type="subcellular location">
    <subcellularLocation>
        <location evidence="1">Cytoplasm</location>
    </subcellularLocation>
</comment>
<comment type="similarity">
    <text evidence="1">Belongs to the RNA methyltransferase TrmD family.</text>
</comment>
<evidence type="ECO:0000255" key="1">
    <source>
        <dbReference type="HAMAP-Rule" id="MF_00605"/>
    </source>
</evidence>
<accession>Q1Q8A6</accession>
<dbReference type="EC" id="2.1.1.228" evidence="1"/>
<dbReference type="EMBL" id="CP000323">
    <property type="protein sequence ID" value="ABE76097.1"/>
    <property type="molecule type" value="Genomic_DNA"/>
</dbReference>
<dbReference type="RefSeq" id="WP_011514627.1">
    <property type="nucleotide sequence ID" value="NC_007969.1"/>
</dbReference>
<dbReference type="SMR" id="Q1Q8A6"/>
<dbReference type="STRING" id="335284.Pcryo_2320"/>
<dbReference type="KEGG" id="pcr:Pcryo_2320"/>
<dbReference type="eggNOG" id="COG0336">
    <property type="taxonomic scope" value="Bacteria"/>
</dbReference>
<dbReference type="HOGENOM" id="CLU_047363_0_1_6"/>
<dbReference type="Proteomes" id="UP000002425">
    <property type="component" value="Chromosome"/>
</dbReference>
<dbReference type="GO" id="GO:0005829">
    <property type="term" value="C:cytosol"/>
    <property type="evidence" value="ECO:0007669"/>
    <property type="project" value="TreeGrafter"/>
</dbReference>
<dbReference type="GO" id="GO:0052906">
    <property type="term" value="F:tRNA (guanine(37)-N1)-methyltransferase activity"/>
    <property type="evidence" value="ECO:0007669"/>
    <property type="project" value="UniProtKB-UniRule"/>
</dbReference>
<dbReference type="GO" id="GO:0002939">
    <property type="term" value="P:tRNA N1-guanine methylation"/>
    <property type="evidence" value="ECO:0007669"/>
    <property type="project" value="TreeGrafter"/>
</dbReference>
<dbReference type="CDD" id="cd18080">
    <property type="entry name" value="TrmD-like"/>
    <property type="match status" value="1"/>
</dbReference>
<dbReference type="FunFam" id="1.10.1270.20:FF:000001">
    <property type="entry name" value="tRNA (guanine-N(1)-)-methyltransferase"/>
    <property type="match status" value="1"/>
</dbReference>
<dbReference type="FunFam" id="3.40.1280.10:FF:000001">
    <property type="entry name" value="tRNA (guanine-N(1)-)-methyltransferase"/>
    <property type="match status" value="1"/>
</dbReference>
<dbReference type="Gene3D" id="3.40.1280.10">
    <property type="match status" value="1"/>
</dbReference>
<dbReference type="Gene3D" id="1.10.1270.20">
    <property type="entry name" value="tRNA(m1g37)methyltransferase, domain 2"/>
    <property type="match status" value="1"/>
</dbReference>
<dbReference type="HAMAP" id="MF_00605">
    <property type="entry name" value="TrmD"/>
    <property type="match status" value="1"/>
</dbReference>
<dbReference type="InterPro" id="IPR029028">
    <property type="entry name" value="Alpha/beta_knot_MTases"/>
</dbReference>
<dbReference type="InterPro" id="IPR023148">
    <property type="entry name" value="tRNA_m1G_MeTrfase_C_sf"/>
</dbReference>
<dbReference type="InterPro" id="IPR002649">
    <property type="entry name" value="tRNA_m1G_MeTrfase_TrmD"/>
</dbReference>
<dbReference type="InterPro" id="IPR029026">
    <property type="entry name" value="tRNA_m1G_MTases_N"/>
</dbReference>
<dbReference type="InterPro" id="IPR016009">
    <property type="entry name" value="tRNA_MeTrfase_TRMD/TRM10"/>
</dbReference>
<dbReference type="NCBIfam" id="NF000648">
    <property type="entry name" value="PRK00026.1"/>
    <property type="match status" value="1"/>
</dbReference>
<dbReference type="NCBIfam" id="TIGR00088">
    <property type="entry name" value="trmD"/>
    <property type="match status" value="1"/>
</dbReference>
<dbReference type="PANTHER" id="PTHR46417">
    <property type="entry name" value="TRNA (GUANINE-N(1)-)-METHYLTRANSFERASE"/>
    <property type="match status" value="1"/>
</dbReference>
<dbReference type="PANTHER" id="PTHR46417:SF1">
    <property type="entry name" value="TRNA (GUANINE-N(1)-)-METHYLTRANSFERASE"/>
    <property type="match status" value="1"/>
</dbReference>
<dbReference type="Pfam" id="PF01746">
    <property type="entry name" value="tRNA_m1G_MT"/>
    <property type="match status" value="1"/>
</dbReference>
<dbReference type="PIRSF" id="PIRSF000386">
    <property type="entry name" value="tRNA_mtase"/>
    <property type="match status" value="1"/>
</dbReference>
<dbReference type="SUPFAM" id="SSF75217">
    <property type="entry name" value="alpha/beta knot"/>
    <property type="match status" value="1"/>
</dbReference>
<protein>
    <recommendedName>
        <fullName evidence="1">tRNA (guanine-N(1)-)-methyltransferase</fullName>
        <ecNumber evidence="1">2.1.1.228</ecNumber>
    </recommendedName>
    <alternativeName>
        <fullName evidence="1">M1G-methyltransferase</fullName>
    </alternativeName>
    <alternativeName>
        <fullName evidence="1">tRNA [GM37] methyltransferase</fullName>
    </alternativeName>
</protein>
<keyword id="KW-0963">Cytoplasm</keyword>
<keyword id="KW-0489">Methyltransferase</keyword>
<keyword id="KW-0949">S-adenosyl-L-methionine</keyword>
<keyword id="KW-0808">Transferase</keyword>
<keyword id="KW-0819">tRNA processing</keyword>
<organism>
    <name type="scientific">Psychrobacter cryohalolentis (strain ATCC BAA-1226 / DSM 17306 / VKM B-2378 / K5)</name>
    <dbReference type="NCBI Taxonomy" id="335284"/>
    <lineage>
        <taxon>Bacteria</taxon>
        <taxon>Pseudomonadati</taxon>
        <taxon>Pseudomonadota</taxon>
        <taxon>Gammaproteobacteria</taxon>
        <taxon>Moraxellales</taxon>
        <taxon>Moraxellaceae</taxon>
        <taxon>Psychrobacter</taxon>
    </lineage>
</organism>
<name>TRMD_PSYCK</name>
<sequence length="254" mass="28601">MYFAVISIFPEMFATIREFGITGRAVTQKQVTIECINPRDFTSDNYRRIDERPYGGGPGMVMMAEPLSQAIEDARLRASQHGCRVDKAHCPVIYMSPQGQTLSESSVVDMTEYDGMIILCGRYEGIDERLLSQYVDMEISLGDYVLTGGELPAMVLMDSVIRRLPDIMGDDKSAEQDSFVDGLLDCPHYTKPHEFAGMAVPEVLLSGHHANIAKWRFSQQVERTQARRPDLWQAFTPTVEQAKWLKALAKADKK</sequence>
<reference key="1">
    <citation type="submission" date="2006-03" db="EMBL/GenBank/DDBJ databases">
        <title>Complete sequence of chromosome of Psychrobacter cryohalolentis K5.</title>
        <authorList>
            <consortium name="US DOE Joint Genome Institute"/>
            <person name="Copeland A."/>
            <person name="Lucas S."/>
            <person name="Lapidus A."/>
            <person name="Barry K."/>
            <person name="Detter J.C."/>
            <person name="Glavina T."/>
            <person name="Hammon N."/>
            <person name="Israni S."/>
            <person name="Dalin E."/>
            <person name="Tice H."/>
            <person name="Pitluck S."/>
            <person name="Brettin T."/>
            <person name="Bruce D."/>
            <person name="Han C."/>
            <person name="Tapia R."/>
            <person name="Sims D.R."/>
            <person name="Gilna P."/>
            <person name="Schmutz J."/>
            <person name="Larimer F."/>
            <person name="Land M."/>
            <person name="Hauser L."/>
            <person name="Kyrpides N."/>
            <person name="Kim E."/>
            <person name="Richardson P."/>
        </authorList>
    </citation>
    <scope>NUCLEOTIDE SEQUENCE [LARGE SCALE GENOMIC DNA]</scope>
    <source>
        <strain>ATCC BAA-1226 / DSM 17306 / VKM B-2378 / K5</strain>
    </source>
</reference>
<gene>
    <name evidence="1" type="primary">trmD</name>
    <name type="ordered locus">Pcryo_2320</name>
</gene>
<feature type="chain" id="PRO_0000257452" description="tRNA (guanine-N(1)-)-methyltransferase">
    <location>
        <begin position="1"/>
        <end position="254"/>
    </location>
</feature>
<feature type="binding site" evidence="1">
    <location>
        <position position="121"/>
    </location>
    <ligand>
        <name>S-adenosyl-L-methionine</name>
        <dbReference type="ChEBI" id="CHEBI:59789"/>
    </ligand>
</feature>
<feature type="binding site" evidence="1">
    <location>
        <begin position="141"/>
        <end position="146"/>
    </location>
    <ligand>
        <name>S-adenosyl-L-methionine</name>
        <dbReference type="ChEBI" id="CHEBI:59789"/>
    </ligand>
</feature>